<keyword id="KW-0002">3D-structure</keyword>
<keyword id="KW-0025">Alternative splicing</keyword>
<keyword id="KW-0497">Mitogen</keyword>
<keyword id="KW-0597">Phosphoprotein</keyword>
<keyword id="KW-1267">Proteomics identification</keyword>
<keyword id="KW-1185">Reference proteome</keyword>
<evidence type="ECO:0000256" key="1">
    <source>
        <dbReference type="SAM" id="MobiDB-lite"/>
    </source>
</evidence>
<evidence type="ECO:0000269" key="2">
    <source>
    </source>
</evidence>
<evidence type="ECO:0000303" key="3">
    <source>
    </source>
</evidence>
<evidence type="ECO:0000303" key="4">
    <source>
    </source>
</evidence>
<evidence type="ECO:0000305" key="5"/>
<evidence type="ECO:0007744" key="6">
    <source>
    </source>
</evidence>
<evidence type="ECO:0007829" key="7">
    <source>
        <dbReference type="PDB" id="2DKZ"/>
    </source>
</evidence>
<gene>
    <name type="primary">GAREM1</name>
    <name type="synonym">C18orf11</name>
    <name type="synonym">FAM59A</name>
    <name type="synonym">GAREM</name>
</gene>
<accession>Q9H706</accession>
<accession>Q0VAG3</accession>
<accession>Q0VAG4</accession>
<accession>Q8ND03</accession>
<accession>Q9BSF5</accession>
<dbReference type="EMBL" id="AK025263">
    <property type="protein sequence ID" value="BAB15094.1"/>
    <property type="molecule type" value="mRNA"/>
</dbReference>
<dbReference type="EMBL" id="AL834491">
    <property type="protein sequence ID" value="CAD39149.1"/>
    <property type="status" value="ALT_INIT"/>
    <property type="molecule type" value="mRNA"/>
</dbReference>
<dbReference type="EMBL" id="BC005074">
    <property type="protein sequence ID" value="AAH05074.1"/>
    <property type="molecule type" value="mRNA"/>
</dbReference>
<dbReference type="EMBL" id="BC121067">
    <property type="protein sequence ID" value="AAI21068.1"/>
    <property type="molecule type" value="mRNA"/>
</dbReference>
<dbReference type="EMBL" id="BC121068">
    <property type="protein sequence ID" value="AAI21069.1"/>
    <property type="molecule type" value="mRNA"/>
</dbReference>
<dbReference type="CCDS" id="CCDS11905.1">
    <molecule id="Q9H706-3"/>
</dbReference>
<dbReference type="CCDS" id="CCDS56057.1">
    <molecule id="Q9H706-1"/>
</dbReference>
<dbReference type="RefSeq" id="NP_001229338.1">
    <molecule id="Q9H706-1"/>
    <property type="nucleotide sequence ID" value="NM_001242409.2"/>
</dbReference>
<dbReference type="RefSeq" id="NP_073588.1">
    <molecule id="Q9H706-3"/>
    <property type="nucleotide sequence ID" value="NM_022751.3"/>
</dbReference>
<dbReference type="PDB" id="2DKZ">
    <property type="method" value="NMR"/>
    <property type="chains" value="A=801-871"/>
</dbReference>
<dbReference type="PDBsum" id="2DKZ"/>
<dbReference type="SMR" id="Q9H706"/>
<dbReference type="BioGRID" id="122275">
    <property type="interactions" value="29"/>
</dbReference>
<dbReference type="FunCoup" id="Q9H706">
    <property type="interactions" value="855"/>
</dbReference>
<dbReference type="IntAct" id="Q9H706">
    <property type="interactions" value="37"/>
</dbReference>
<dbReference type="MINT" id="Q9H706"/>
<dbReference type="STRING" id="9606.ENSP00000269209"/>
<dbReference type="iPTMnet" id="Q9H706"/>
<dbReference type="PhosphoSitePlus" id="Q9H706"/>
<dbReference type="BioMuta" id="GAREM1"/>
<dbReference type="DMDM" id="125991851"/>
<dbReference type="jPOST" id="Q9H706"/>
<dbReference type="MassIVE" id="Q9H706"/>
<dbReference type="PaxDb" id="9606-ENSP00000269209"/>
<dbReference type="PeptideAtlas" id="Q9H706"/>
<dbReference type="ProteomicsDB" id="81068">
    <molecule id="Q9H706-1"/>
</dbReference>
<dbReference type="ProteomicsDB" id="81069">
    <molecule id="Q9H706-2"/>
</dbReference>
<dbReference type="ProteomicsDB" id="81070">
    <molecule id="Q9H706-3"/>
</dbReference>
<dbReference type="Antibodypedia" id="41891">
    <property type="antibodies" value="108 antibodies from 23 providers"/>
</dbReference>
<dbReference type="DNASU" id="64762"/>
<dbReference type="Ensembl" id="ENST00000269209.7">
    <molecule id="Q9H706-1"/>
    <property type="protein sequence ID" value="ENSP00000269209.6"/>
    <property type="gene ID" value="ENSG00000141441.16"/>
</dbReference>
<dbReference type="Ensembl" id="ENST00000399218.8">
    <molecule id="Q9H706-3"/>
    <property type="protein sequence ID" value="ENSP00000382165.3"/>
    <property type="gene ID" value="ENSG00000141441.16"/>
</dbReference>
<dbReference type="GeneID" id="64762"/>
<dbReference type="KEGG" id="hsa:64762"/>
<dbReference type="MANE-Select" id="ENST00000269209.7">
    <property type="protein sequence ID" value="ENSP00000269209.6"/>
    <property type="RefSeq nucleotide sequence ID" value="NM_001242409.2"/>
    <property type="RefSeq protein sequence ID" value="NP_001229338.1"/>
</dbReference>
<dbReference type="UCSC" id="uc002kxk.3">
    <molecule id="Q9H706-1"/>
    <property type="organism name" value="human"/>
</dbReference>
<dbReference type="AGR" id="HGNC:26136"/>
<dbReference type="CTD" id="64762"/>
<dbReference type="DisGeNET" id="64762"/>
<dbReference type="GeneCards" id="GAREM1"/>
<dbReference type="HGNC" id="HGNC:26136">
    <property type="gene designation" value="GAREM1"/>
</dbReference>
<dbReference type="HPA" id="ENSG00000141441">
    <property type="expression patterns" value="Tissue enhanced (pancreas)"/>
</dbReference>
<dbReference type="MIM" id="617998">
    <property type="type" value="gene"/>
</dbReference>
<dbReference type="neXtProt" id="NX_Q9H706"/>
<dbReference type="OpenTargets" id="ENSG00000141441"/>
<dbReference type="PharmGKB" id="PA134888032"/>
<dbReference type="VEuPathDB" id="HostDB:ENSG00000141441"/>
<dbReference type="eggNOG" id="ENOG502QRDN">
    <property type="taxonomic scope" value="Eukaryota"/>
</dbReference>
<dbReference type="GeneTree" id="ENSGT00530000063834"/>
<dbReference type="HOGENOM" id="CLU_014784_0_0_1"/>
<dbReference type="InParanoid" id="Q9H706"/>
<dbReference type="OMA" id="RADWNED"/>
<dbReference type="OrthoDB" id="6077228at2759"/>
<dbReference type="PAN-GO" id="Q9H706">
    <property type="GO annotations" value="3 GO annotations based on evolutionary models"/>
</dbReference>
<dbReference type="PhylomeDB" id="Q9H706"/>
<dbReference type="TreeFam" id="TF329726"/>
<dbReference type="PathwayCommons" id="Q9H706"/>
<dbReference type="SignaLink" id="Q9H706"/>
<dbReference type="BioGRID-ORCS" id="64762">
    <property type="hits" value="25 hits in 1133 CRISPR screens"/>
</dbReference>
<dbReference type="ChiTaRS" id="GAREM1">
    <property type="organism name" value="human"/>
</dbReference>
<dbReference type="EvolutionaryTrace" id="Q9H706"/>
<dbReference type="GenomeRNAi" id="64762"/>
<dbReference type="Pharos" id="Q9H706">
    <property type="development level" value="Tbio"/>
</dbReference>
<dbReference type="PRO" id="PR:Q9H706"/>
<dbReference type="Proteomes" id="UP000005640">
    <property type="component" value="Chromosome 18"/>
</dbReference>
<dbReference type="RNAct" id="Q9H706">
    <property type="molecule type" value="protein"/>
</dbReference>
<dbReference type="Bgee" id="ENSG00000141441">
    <property type="expression patterns" value="Expressed in cortical plate and 201 other cell types or tissues"/>
</dbReference>
<dbReference type="ExpressionAtlas" id="Q9H706">
    <property type="expression patterns" value="baseline and differential"/>
</dbReference>
<dbReference type="GO" id="GO:0005886">
    <property type="term" value="C:plasma membrane"/>
    <property type="evidence" value="ECO:0000303"/>
    <property type="project" value="UniProtKB"/>
</dbReference>
<dbReference type="GO" id="GO:0070064">
    <property type="term" value="F:proline-rich region binding"/>
    <property type="evidence" value="ECO:0000314"/>
    <property type="project" value="UniProtKB"/>
</dbReference>
<dbReference type="GO" id="GO:0071364">
    <property type="term" value="P:cellular response to epidermal growth factor stimulus"/>
    <property type="evidence" value="ECO:0000314"/>
    <property type="project" value="UniProtKB"/>
</dbReference>
<dbReference type="GO" id="GO:0007173">
    <property type="term" value="P:epidermal growth factor receptor signaling pathway"/>
    <property type="evidence" value="ECO:0000314"/>
    <property type="project" value="UniProtKB"/>
</dbReference>
<dbReference type="GO" id="GO:0035264">
    <property type="term" value="P:multicellular organism growth"/>
    <property type="evidence" value="ECO:0007669"/>
    <property type="project" value="Ensembl"/>
</dbReference>
<dbReference type="GO" id="GO:0051781">
    <property type="term" value="P:positive regulation of cell division"/>
    <property type="evidence" value="ECO:0007669"/>
    <property type="project" value="UniProtKB-KW"/>
</dbReference>
<dbReference type="GO" id="GO:0008284">
    <property type="term" value="P:positive regulation of cell population proliferation"/>
    <property type="evidence" value="ECO:0000314"/>
    <property type="project" value="UniProtKB"/>
</dbReference>
<dbReference type="GO" id="GO:0070374">
    <property type="term" value="P:positive regulation of ERK1 and ERK2 cascade"/>
    <property type="evidence" value="ECO:0000315"/>
    <property type="project" value="UniProtKB"/>
</dbReference>
<dbReference type="CDD" id="cd09525">
    <property type="entry name" value="SAM_GAREM"/>
    <property type="match status" value="1"/>
</dbReference>
<dbReference type="FunFam" id="1.10.150.50:FF:000042">
    <property type="entry name" value="GRB2-associated and regulator of MAPK protein 1"/>
    <property type="match status" value="1"/>
</dbReference>
<dbReference type="Gene3D" id="1.10.150.50">
    <property type="entry name" value="Transcription Factor, Ets-1"/>
    <property type="match status" value="1"/>
</dbReference>
<dbReference type="InterPro" id="IPR025946">
    <property type="entry name" value="CABIT_dom"/>
</dbReference>
<dbReference type="InterPro" id="IPR052281">
    <property type="entry name" value="GAREM"/>
</dbReference>
<dbReference type="InterPro" id="IPR013761">
    <property type="entry name" value="SAM/pointed_sf"/>
</dbReference>
<dbReference type="PANTHER" id="PTHR14454:SF6">
    <property type="entry name" value="GRB2-ASSOCIATED AND REGULATOR OF MAPK PROTEIN 1"/>
    <property type="match status" value="1"/>
</dbReference>
<dbReference type="PANTHER" id="PTHR14454">
    <property type="entry name" value="GRB2-ASSOCIATED AND REGULATOR OF MAPK PROTEIN FAMILY MEMBER"/>
    <property type="match status" value="1"/>
</dbReference>
<dbReference type="Pfam" id="PF12736">
    <property type="entry name" value="CABIT"/>
    <property type="match status" value="1"/>
</dbReference>
<dbReference type="SUPFAM" id="SSF47769">
    <property type="entry name" value="SAM/Pointed domain"/>
    <property type="match status" value="1"/>
</dbReference>
<comment type="function">
    <molecule>Isoform 1</molecule>
    <text evidence="2">Acts as an adapter protein that plays a role in intracellular signaling cascades triggered either by the cell surface activated epidermal growth factor receptor and/or cytoplasmic protein tyrosine kinases. Promotes activation of the MAPK/ERK signaling pathway. Plays a role in the regulation of cell proliferation.</text>
</comment>
<comment type="subunit">
    <text evidence="2">Isoform 1 interacts with EGFR. Isoform 1 interacts (via proline-rich domain and phosphorylated at Tyr-105 and Tyr-453) with GRB2 (via SH3 domains); the interaction occurs upon EGF stimulation. Isoform 1 interacts (phosphorylated at Tyr-453) with PTPN11; the interaction increases MAPK/ERK activity and does not affect the GRB2/SOS complex formation. Isoform 2 does not interact with GRB2.</text>
</comment>
<comment type="interaction">
    <interactant intactId="EBI-3440103">
        <id>Q9H706</id>
    </interactant>
    <interactant intactId="EBI-886">
        <id>P46108</id>
        <label>CRK</label>
    </interactant>
    <organismsDiffer>false</organismsDiffer>
    <experiments>3</experiments>
</comment>
<comment type="interaction">
    <interactant intactId="EBI-3440103">
        <id>Q9H706</id>
    </interactant>
    <interactant intactId="EBI-740418">
        <id>O75791</id>
        <label>GRAP2</label>
    </interactant>
    <organismsDiffer>false</organismsDiffer>
    <experiments>5</experiments>
</comment>
<comment type="interaction">
    <interactant intactId="EBI-3440103">
        <id>Q9H706</id>
    </interactant>
    <interactant intactId="EBI-401755">
        <id>P62993</id>
        <label>GRB2</label>
    </interactant>
    <organismsDiffer>false</organismsDiffer>
    <experiments>13</experiments>
</comment>
<comment type="interaction">
    <interactant intactId="EBI-3440103">
        <id>Q9H706</id>
    </interactant>
    <interactant intactId="EBI-713635">
        <id>O43639</id>
        <label>NCK2</label>
    </interactant>
    <organismsDiffer>false</organismsDiffer>
    <experiments>3</experiments>
</comment>
<comment type="alternative products">
    <event type="alternative splicing"/>
    <isoform>
        <id>Q9H706-1</id>
        <name>1</name>
        <sequence type="displayed"/>
    </isoform>
    <isoform>
        <id>Q9H706-2</id>
        <name>2</name>
        <name>GAREM(S)</name>
        <sequence type="described" ref="VSP_023047"/>
    </isoform>
    <isoform>
        <id>Q9H706-3</id>
        <name>3</name>
        <sequence type="described" ref="VSP_023048"/>
    </isoform>
</comment>
<comment type="tissue specificity">
    <text evidence="2">Isoform 1 is ubiquitously expressed.</text>
</comment>
<comment type="PTM">
    <text evidence="2">On EGF stimulation, phosphorylated on Tyr-105 and Tyr-453.</text>
</comment>
<comment type="similarity">
    <text evidence="5">Belongs to the GAREM family.</text>
</comment>
<comment type="sequence caution" evidence="5">
    <conflict type="erroneous initiation">
        <sequence resource="EMBL-CDS" id="CAD39149"/>
    </conflict>
    <text>Extended N-terminus.</text>
</comment>
<feature type="chain" id="PRO_0000277647" description="GRB2-associated and regulator of MAPK protein 1">
    <location>
        <begin position="1"/>
        <end position="876"/>
    </location>
</feature>
<feature type="domain" description="SAM">
    <location>
        <begin position="811"/>
        <end position="876"/>
    </location>
</feature>
<feature type="region of interest" description="CABIT">
    <location>
        <begin position="12"/>
        <end position="320"/>
    </location>
</feature>
<feature type="region of interest" description="Disordered" evidence="1">
    <location>
        <begin position="496"/>
        <end position="572"/>
    </location>
</feature>
<feature type="region of interest" description="Necessary for interaction with GRB2" evidence="2">
    <location>
        <begin position="498"/>
        <end position="550"/>
    </location>
</feature>
<feature type="region of interest" description="Disordered" evidence="1">
    <location>
        <begin position="626"/>
        <end position="664"/>
    </location>
</feature>
<feature type="region of interest" description="Disordered" evidence="1">
    <location>
        <begin position="738"/>
        <end position="763"/>
    </location>
</feature>
<feature type="compositionally biased region" description="Polar residues" evidence="1">
    <location>
        <begin position="558"/>
        <end position="572"/>
    </location>
</feature>
<feature type="compositionally biased region" description="Polar residues" evidence="1">
    <location>
        <begin position="631"/>
        <end position="640"/>
    </location>
</feature>
<feature type="compositionally biased region" description="Polar residues" evidence="1">
    <location>
        <begin position="648"/>
        <end position="658"/>
    </location>
</feature>
<feature type="modified residue" description="Phosphotyrosine" evidence="2">
    <location>
        <position position="105"/>
    </location>
</feature>
<feature type="modified residue" description="Phosphotyrosine" evidence="2">
    <location>
        <position position="453"/>
    </location>
</feature>
<feature type="modified residue" description="Phosphoserine" evidence="6">
    <location>
        <position position="610"/>
    </location>
</feature>
<feature type="modified residue" description="Phosphoserine" evidence="6">
    <location>
        <position position="614"/>
    </location>
</feature>
<feature type="splice variant" id="VSP_023047" description="In isoform 2." evidence="4">
    <location>
        <begin position="495"/>
        <end position="563"/>
    </location>
</feature>
<feature type="splice variant" id="VSP_023048" description="In isoform 3." evidence="3">
    <location>
        <position position="579"/>
    </location>
</feature>
<feature type="sequence variant" id="VAR_030580" description="In dbSNP:rs671138.">
    <original>T</original>
    <variation>N</variation>
    <location>
        <position position="243"/>
    </location>
</feature>
<feature type="sequence variant" id="VAR_030581" description="In dbSNP:rs3744921.">
    <original>K</original>
    <variation>R</variation>
    <location>
        <position position="291"/>
    </location>
</feature>
<feature type="sequence variant" id="VAR_030582" description="In dbSNP:rs16962974.">
    <original>A</original>
    <variation>V</variation>
    <location>
        <position position="490"/>
    </location>
</feature>
<feature type="sequence variant" id="VAR_030583" description="In dbSNP:rs3891458.">
    <original>V</original>
    <variation>I</variation>
    <location>
        <position position="580"/>
    </location>
</feature>
<feature type="sequence variant" id="VAR_030584" description="In dbSNP:rs2276374.">
    <original>T</original>
    <variation>M</variation>
    <location>
        <position position="720"/>
    </location>
</feature>
<feature type="mutagenesis site" description="Does not abolish phosphorylation upon EGF stimulation. Reduces interaction with GRB2. Abolishes phosphorylation, interaction with GRB2 and ERK activation upon EGF stimulation; when associated with F-453." evidence="2">
    <original>Y</original>
    <variation>F</variation>
    <location>
        <position position="105"/>
    </location>
</feature>
<feature type="mutagenesis site" description="Does not abolish phosphorylation upon EGF stimulation. Abolishes interaction with PTPN11. Abolishes phosphorylation upon EGF stimulation; when associated with F-105." evidence="2">
    <original>Y</original>
    <variation>F</variation>
    <location>
        <position position="453"/>
    </location>
</feature>
<feature type="helix" evidence="7">
    <location>
        <begin position="813"/>
        <end position="819"/>
    </location>
</feature>
<feature type="helix" evidence="7">
    <location>
        <begin position="820"/>
        <end position="822"/>
    </location>
</feature>
<feature type="helix" evidence="7">
    <location>
        <begin position="827"/>
        <end position="834"/>
    </location>
</feature>
<feature type="turn" evidence="7">
    <location>
        <begin position="835"/>
        <end position="837"/>
    </location>
</feature>
<feature type="helix" evidence="7">
    <location>
        <begin position="840"/>
        <end position="845"/>
    </location>
</feature>
<feature type="helix" evidence="7">
    <location>
        <begin position="848"/>
        <end position="853"/>
    </location>
</feature>
<feature type="helix" evidence="7">
    <location>
        <begin position="859"/>
        <end position="870"/>
    </location>
</feature>
<proteinExistence type="evidence at protein level"/>
<protein>
    <recommendedName>
        <fullName>GRB2-associated and regulator of MAPK protein 1</fullName>
    </recommendedName>
    <alternativeName>
        <fullName>GRB2-associated and regulator of MAPK1</fullName>
    </alternativeName>
</protein>
<organism>
    <name type="scientific">Homo sapiens</name>
    <name type="common">Human</name>
    <dbReference type="NCBI Taxonomy" id="9606"/>
    <lineage>
        <taxon>Eukaryota</taxon>
        <taxon>Metazoa</taxon>
        <taxon>Chordata</taxon>
        <taxon>Craniata</taxon>
        <taxon>Vertebrata</taxon>
        <taxon>Euteleostomi</taxon>
        <taxon>Mammalia</taxon>
        <taxon>Eutheria</taxon>
        <taxon>Euarchontoglires</taxon>
        <taxon>Primates</taxon>
        <taxon>Haplorrhini</taxon>
        <taxon>Catarrhini</taxon>
        <taxon>Hominidae</taxon>
        <taxon>Homo</taxon>
    </lineage>
</organism>
<name>GARE1_HUMAN</name>
<sequence length="876" mass="97186">MDPAPSLGCSLKDVKWSSVAVPLDLLVSTYRLPQIARLDNGECVEGLRENDYLLIHSCRQWTTITAHSLEEGHYVIGPKIEIPVHYAGQFKLLEQDRDIKEPVQYFNSVEEVAKAFPERVYVMEDITFNVKVASGECNEDTEVYNITLCTGDELTLMGQAEILYAKTFKEKSRLNTIFKKIGKLNSISKLGKGKMPCLICMNHRTNESISLPFQCKGRFSTRSPLELQMQEGEHTIRNIVEKTRLPVNVTVPSPPPRNPYDLHFIREGHRYKFVNIQTKTVVVCCVLRNNKILPMHFPLHLTVPKFSLPEHLVKGESWPETLVHHWLGICQEQFDIDEYSRAVRDVKTDWNEECKSPKKGRCSGHNHVPNSLSYARDELTQSFHRLSVCVYGNNLHGNSEVNLHGCRDLGGDWAPFPHDILPYQDSGDSGSDYLFPEASEESAGIPGKSELPYEELWLEEGKPSHQPLTRSLSEKNRCDQFRGSVRSKCATSPLPIPGTLGAAVKSSDTALPPPPVPPKSEAVREECRLLNAPPVPPRSAKPLSTSPSIPPRTVKPARQQTRSPSPTLSYYSSGLHNISVTKTDTNPSESTPVSCYPCNRVKTDSVDLKSPFGSPSAEAVSSRLSWPNHYSGASESQTRSDFLLDPSRSYSYPRQKTPGTPKRNCPAPFDFDGCELLASPTSPVTAEFSSSVSGCPKSASYSLESTDVKSLAAGVTKQSTSCPALPPRAPKLVEEKVASETSPLPLKIDGAEEDPKSGSPDLSEDQYFVKKGMQDIFSASYPFSSPLHLQLAPRSCGDGSPWQPPADLSGLSIEEVSKSLRFIGLSEDVISFFVTEKIDGNLLVQLTEEILSEDFKLSKLQVKKIMQFINGWRPKI</sequence>
<reference key="1">
    <citation type="journal article" date="2004" name="Nat. Genet.">
        <title>Complete sequencing and characterization of 21,243 full-length human cDNAs.</title>
        <authorList>
            <person name="Ota T."/>
            <person name="Suzuki Y."/>
            <person name="Nishikawa T."/>
            <person name="Otsuki T."/>
            <person name="Sugiyama T."/>
            <person name="Irie R."/>
            <person name="Wakamatsu A."/>
            <person name="Hayashi K."/>
            <person name="Sato H."/>
            <person name="Nagai K."/>
            <person name="Kimura K."/>
            <person name="Makita H."/>
            <person name="Sekine M."/>
            <person name="Obayashi M."/>
            <person name="Nishi T."/>
            <person name="Shibahara T."/>
            <person name="Tanaka T."/>
            <person name="Ishii S."/>
            <person name="Yamamoto J."/>
            <person name="Saito K."/>
            <person name="Kawai Y."/>
            <person name="Isono Y."/>
            <person name="Nakamura Y."/>
            <person name="Nagahari K."/>
            <person name="Murakami K."/>
            <person name="Yasuda T."/>
            <person name="Iwayanagi T."/>
            <person name="Wagatsuma M."/>
            <person name="Shiratori A."/>
            <person name="Sudo H."/>
            <person name="Hosoiri T."/>
            <person name="Kaku Y."/>
            <person name="Kodaira H."/>
            <person name="Kondo H."/>
            <person name="Sugawara M."/>
            <person name="Takahashi M."/>
            <person name="Kanda K."/>
            <person name="Yokoi T."/>
            <person name="Furuya T."/>
            <person name="Kikkawa E."/>
            <person name="Omura Y."/>
            <person name="Abe K."/>
            <person name="Kamihara K."/>
            <person name="Katsuta N."/>
            <person name="Sato K."/>
            <person name="Tanikawa M."/>
            <person name="Yamazaki M."/>
            <person name="Ninomiya K."/>
            <person name="Ishibashi T."/>
            <person name="Yamashita H."/>
            <person name="Murakawa K."/>
            <person name="Fujimori K."/>
            <person name="Tanai H."/>
            <person name="Kimata M."/>
            <person name="Watanabe M."/>
            <person name="Hiraoka S."/>
            <person name="Chiba Y."/>
            <person name="Ishida S."/>
            <person name="Ono Y."/>
            <person name="Takiguchi S."/>
            <person name="Watanabe S."/>
            <person name="Yosida M."/>
            <person name="Hotuta T."/>
            <person name="Kusano J."/>
            <person name="Kanehori K."/>
            <person name="Takahashi-Fujii A."/>
            <person name="Hara H."/>
            <person name="Tanase T.-O."/>
            <person name="Nomura Y."/>
            <person name="Togiya S."/>
            <person name="Komai F."/>
            <person name="Hara R."/>
            <person name="Takeuchi K."/>
            <person name="Arita M."/>
            <person name="Imose N."/>
            <person name="Musashino K."/>
            <person name="Yuuki H."/>
            <person name="Oshima A."/>
            <person name="Sasaki N."/>
            <person name="Aotsuka S."/>
            <person name="Yoshikawa Y."/>
            <person name="Matsunawa H."/>
            <person name="Ichihara T."/>
            <person name="Shiohata N."/>
            <person name="Sano S."/>
            <person name="Moriya S."/>
            <person name="Momiyama H."/>
            <person name="Satoh N."/>
            <person name="Takami S."/>
            <person name="Terashima Y."/>
            <person name="Suzuki O."/>
            <person name="Nakagawa S."/>
            <person name="Senoh A."/>
            <person name="Mizoguchi H."/>
            <person name="Goto Y."/>
            <person name="Shimizu F."/>
            <person name="Wakebe H."/>
            <person name="Hishigaki H."/>
            <person name="Watanabe T."/>
            <person name="Sugiyama A."/>
            <person name="Takemoto M."/>
            <person name="Kawakami B."/>
            <person name="Yamazaki M."/>
            <person name="Watanabe K."/>
            <person name="Kumagai A."/>
            <person name="Itakura S."/>
            <person name="Fukuzumi Y."/>
            <person name="Fujimori Y."/>
            <person name="Komiyama M."/>
            <person name="Tashiro H."/>
            <person name="Tanigami A."/>
            <person name="Fujiwara T."/>
            <person name="Ono T."/>
            <person name="Yamada K."/>
            <person name="Fujii Y."/>
            <person name="Ozaki K."/>
            <person name="Hirao M."/>
            <person name="Ohmori Y."/>
            <person name="Kawabata A."/>
            <person name="Hikiji T."/>
            <person name="Kobatake N."/>
            <person name="Inagaki H."/>
            <person name="Ikema Y."/>
            <person name="Okamoto S."/>
            <person name="Okitani R."/>
            <person name="Kawakami T."/>
            <person name="Noguchi S."/>
            <person name="Itoh T."/>
            <person name="Shigeta K."/>
            <person name="Senba T."/>
            <person name="Matsumura K."/>
            <person name="Nakajima Y."/>
            <person name="Mizuno T."/>
            <person name="Morinaga M."/>
            <person name="Sasaki M."/>
            <person name="Togashi T."/>
            <person name="Oyama M."/>
            <person name="Hata H."/>
            <person name="Watanabe M."/>
            <person name="Komatsu T."/>
            <person name="Mizushima-Sugano J."/>
            <person name="Satoh T."/>
            <person name="Shirai Y."/>
            <person name="Takahashi Y."/>
            <person name="Nakagawa K."/>
            <person name="Okumura K."/>
            <person name="Nagase T."/>
            <person name="Nomura N."/>
            <person name="Kikuchi H."/>
            <person name="Masuho Y."/>
            <person name="Yamashita R."/>
            <person name="Nakai K."/>
            <person name="Yada T."/>
            <person name="Nakamura Y."/>
            <person name="Ohara O."/>
            <person name="Isogai T."/>
            <person name="Sugano S."/>
        </authorList>
    </citation>
    <scope>NUCLEOTIDE SEQUENCE [LARGE SCALE MRNA] (ISOFORM 3)</scope>
    <source>
        <tissue>Colon</tissue>
    </source>
</reference>
<reference key="2">
    <citation type="journal article" date="2007" name="BMC Genomics">
        <title>The full-ORF clone resource of the German cDNA consortium.</title>
        <authorList>
            <person name="Bechtel S."/>
            <person name="Rosenfelder H."/>
            <person name="Duda A."/>
            <person name="Schmidt C.P."/>
            <person name="Ernst U."/>
            <person name="Wellenreuther R."/>
            <person name="Mehrle A."/>
            <person name="Schuster C."/>
            <person name="Bahr A."/>
            <person name="Bloecker H."/>
            <person name="Heubner D."/>
            <person name="Hoerlein A."/>
            <person name="Michel G."/>
            <person name="Wedler H."/>
            <person name="Koehrer K."/>
            <person name="Ottenwaelder B."/>
            <person name="Poustka A."/>
            <person name="Wiemann S."/>
            <person name="Schupp I."/>
        </authorList>
    </citation>
    <scope>NUCLEOTIDE SEQUENCE [LARGE SCALE MRNA] (ISOFORM 1)</scope>
    <source>
        <tissue>Testis</tissue>
    </source>
</reference>
<reference key="3">
    <citation type="journal article" date="2004" name="Genome Res.">
        <title>The status, quality, and expansion of the NIH full-length cDNA project: the Mammalian Gene Collection (MGC).</title>
        <authorList>
            <consortium name="The MGC Project Team"/>
        </authorList>
    </citation>
    <scope>NUCLEOTIDE SEQUENCE [LARGE SCALE MRNA] (ISOFORMS 1 AND 2)</scope>
    <source>
        <tissue>Lung</tissue>
    </source>
</reference>
<reference key="4">
    <citation type="journal article" date="2009" name="J. Biol. Chem.">
        <title>GAREM, a novel adaptor protein for growth factor receptor-bound protein 2, contributes to cellular transformation through the activation of extracellular signal-regulated kinase signaling.</title>
        <authorList>
            <person name="Tashiro K."/>
            <person name="Tsunematsu T."/>
            <person name="Okubo H."/>
            <person name="Ohta T."/>
            <person name="Sano E."/>
            <person name="Yamauchi E."/>
            <person name="Taniguchi H."/>
            <person name="Konishi H."/>
        </authorList>
    </citation>
    <scope>FUNCTION</scope>
    <scope>INTERACTION WITH EGFR; GRB2 AND PTPN11</scope>
    <scope>ALTERNATIVE SPLICING (ISOFORMS 1 AND 2)</scope>
    <scope>PHOSPHORYLATION AT TYR-453 AND TYR-105</scope>
    <scope>MUTAGENESIS OF TYR-105 AND TYR-453</scope>
    <scope>TISSUE SPECIFICITY</scope>
</reference>
<reference key="5">
    <citation type="journal article" date="2013" name="J. Proteome Res.">
        <title>Toward a comprehensive characterization of a human cancer cell phosphoproteome.</title>
        <authorList>
            <person name="Zhou H."/>
            <person name="Di Palma S."/>
            <person name="Preisinger C."/>
            <person name="Peng M."/>
            <person name="Polat A.N."/>
            <person name="Heck A.J."/>
            <person name="Mohammed S."/>
        </authorList>
    </citation>
    <scope>PHOSPHORYLATION [LARGE SCALE ANALYSIS] AT SER-610 AND SER-614</scope>
    <scope>IDENTIFICATION BY MASS SPECTROMETRY [LARGE SCALE ANALYSIS]</scope>
    <source>
        <tissue>Cervix carcinoma</tissue>
    </source>
</reference>
<reference key="6">
    <citation type="submission" date="2006-10" db="PDB data bank">
        <title>Solution structure of the SAM_PNT-domain of the hypothetical protein LOC64762.</title>
        <authorList>
            <consortium name="RIKEN structural genomics initiative (RSGI)"/>
        </authorList>
    </citation>
    <scope>STRUCTURE BY NMR OF 2-165</scope>
</reference>